<organism>
    <name type="scientific">Gallus gallus</name>
    <name type="common">Chicken</name>
    <dbReference type="NCBI Taxonomy" id="9031"/>
    <lineage>
        <taxon>Eukaryota</taxon>
        <taxon>Metazoa</taxon>
        <taxon>Chordata</taxon>
        <taxon>Craniata</taxon>
        <taxon>Vertebrata</taxon>
        <taxon>Euteleostomi</taxon>
        <taxon>Archelosauria</taxon>
        <taxon>Archosauria</taxon>
        <taxon>Dinosauria</taxon>
        <taxon>Saurischia</taxon>
        <taxon>Theropoda</taxon>
        <taxon>Coelurosauria</taxon>
        <taxon>Aves</taxon>
        <taxon>Neognathae</taxon>
        <taxon>Galloanserae</taxon>
        <taxon>Galliformes</taxon>
        <taxon>Phasianidae</taxon>
        <taxon>Phasianinae</taxon>
        <taxon>Gallus</taxon>
    </lineage>
</organism>
<dbReference type="EC" id="3.6.4.13"/>
<dbReference type="EMBL" id="AJ720478">
    <property type="protein sequence ID" value="CAG32137.1"/>
    <property type="molecule type" value="mRNA"/>
</dbReference>
<dbReference type="RefSeq" id="NP_001073193.1">
    <property type="nucleotide sequence ID" value="NM_001079725.1"/>
</dbReference>
<dbReference type="SMR" id="Q5ZJF6"/>
<dbReference type="FunCoup" id="Q5ZJF6">
    <property type="interactions" value="2278"/>
</dbReference>
<dbReference type="STRING" id="9031.ENSGALP00000027656"/>
<dbReference type="PaxDb" id="9031-ENSGALP00000027656"/>
<dbReference type="GeneID" id="418965"/>
<dbReference type="KEGG" id="gga:418965"/>
<dbReference type="CTD" id="1662"/>
<dbReference type="VEuPathDB" id="HostDB:geneid_418965"/>
<dbReference type="eggNOG" id="KOG0343">
    <property type="taxonomic scope" value="Eukaryota"/>
</dbReference>
<dbReference type="InParanoid" id="Q5ZJF6"/>
<dbReference type="OrthoDB" id="10259640at2759"/>
<dbReference type="PhylomeDB" id="Q5ZJF6"/>
<dbReference type="PRO" id="PR:Q5ZJF6"/>
<dbReference type="Proteomes" id="UP000000539">
    <property type="component" value="Unassembled WGS sequence"/>
</dbReference>
<dbReference type="GO" id="GO:0005634">
    <property type="term" value="C:nucleus"/>
    <property type="evidence" value="ECO:0000318"/>
    <property type="project" value="GO_Central"/>
</dbReference>
<dbReference type="GO" id="GO:0005524">
    <property type="term" value="F:ATP binding"/>
    <property type="evidence" value="ECO:0007669"/>
    <property type="project" value="UniProtKB-KW"/>
</dbReference>
<dbReference type="GO" id="GO:0016887">
    <property type="term" value="F:ATP hydrolysis activity"/>
    <property type="evidence" value="ECO:0007669"/>
    <property type="project" value="RHEA"/>
</dbReference>
<dbReference type="GO" id="GO:0003723">
    <property type="term" value="F:RNA binding"/>
    <property type="evidence" value="ECO:0007669"/>
    <property type="project" value="UniProtKB-KW"/>
</dbReference>
<dbReference type="GO" id="GO:0003724">
    <property type="term" value="F:RNA helicase activity"/>
    <property type="evidence" value="ECO:0007669"/>
    <property type="project" value="UniProtKB-EC"/>
</dbReference>
<dbReference type="GO" id="GO:0006364">
    <property type="term" value="P:rRNA processing"/>
    <property type="evidence" value="ECO:0000318"/>
    <property type="project" value="GO_Central"/>
</dbReference>
<dbReference type="CDD" id="cd17941">
    <property type="entry name" value="DEADc_DDX10"/>
    <property type="match status" value="1"/>
</dbReference>
<dbReference type="CDD" id="cd18787">
    <property type="entry name" value="SF2_C_DEAD"/>
    <property type="match status" value="1"/>
</dbReference>
<dbReference type="FunFam" id="3.40.50.300:FF:000874">
    <property type="entry name" value="RNA helicase"/>
    <property type="match status" value="1"/>
</dbReference>
<dbReference type="FunFam" id="3.40.50.300:FF:001089">
    <property type="entry name" value="RNA helicase"/>
    <property type="match status" value="1"/>
</dbReference>
<dbReference type="Gene3D" id="3.40.50.300">
    <property type="entry name" value="P-loop containing nucleotide triphosphate hydrolases"/>
    <property type="match status" value="2"/>
</dbReference>
<dbReference type="InterPro" id="IPR011545">
    <property type="entry name" value="DEAD/DEAH_box_helicase_dom"/>
</dbReference>
<dbReference type="InterPro" id="IPR014001">
    <property type="entry name" value="Helicase_ATP-bd"/>
</dbReference>
<dbReference type="InterPro" id="IPR001650">
    <property type="entry name" value="Helicase_C-like"/>
</dbReference>
<dbReference type="InterPro" id="IPR027417">
    <property type="entry name" value="P-loop_NTPase"/>
</dbReference>
<dbReference type="InterPro" id="IPR000629">
    <property type="entry name" value="RNA-helicase_DEAD-box_CS"/>
</dbReference>
<dbReference type="InterPro" id="IPR014014">
    <property type="entry name" value="RNA_helicase_DEAD_Q_motif"/>
</dbReference>
<dbReference type="InterPro" id="IPR025313">
    <property type="entry name" value="SPB4-like_CTE"/>
</dbReference>
<dbReference type="PANTHER" id="PTHR24031">
    <property type="entry name" value="RNA HELICASE"/>
    <property type="match status" value="1"/>
</dbReference>
<dbReference type="Pfam" id="PF13959">
    <property type="entry name" value="CTE_SPB4"/>
    <property type="match status" value="1"/>
</dbReference>
<dbReference type="Pfam" id="PF00270">
    <property type="entry name" value="DEAD"/>
    <property type="match status" value="1"/>
</dbReference>
<dbReference type="Pfam" id="PF00271">
    <property type="entry name" value="Helicase_C"/>
    <property type="match status" value="1"/>
</dbReference>
<dbReference type="SMART" id="SM00487">
    <property type="entry name" value="DEXDc"/>
    <property type="match status" value="1"/>
</dbReference>
<dbReference type="SMART" id="SM01178">
    <property type="entry name" value="DUF4217"/>
    <property type="match status" value="1"/>
</dbReference>
<dbReference type="SMART" id="SM00490">
    <property type="entry name" value="HELICc"/>
    <property type="match status" value="1"/>
</dbReference>
<dbReference type="SUPFAM" id="SSF52540">
    <property type="entry name" value="P-loop containing nucleoside triphosphate hydrolases"/>
    <property type="match status" value="1"/>
</dbReference>
<dbReference type="PROSITE" id="PS00039">
    <property type="entry name" value="DEAD_ATP_HELICASE"/>
    <property type="match status" value="1"/>
</dbReference>
<dbReference type="PROSITE" id="PS51192">
    <property type="entry name" value="HELICASE_ATP_BIND_1"/>
    <property type="match status" value="1"/>
</dbReference>
<dbReference type="PROSITE" id="PS51194">
    <property type="entry name" value="HELICASE_CTER"/>
    <property type="match status" value="1"/>
</dbReference>
<dbReference type="PROSITE" id="PS51195">
    <property type="entry name" value="Q_MOTIF"/>
    <property type="match status" value="1"/>
</dbReference>
<keyword id="KW-0067">ATP-binding</keyword>
<keyword id="KW-0175">Coiled coil</keyword>
<keyword id="KW-0347">Helicase</keyword>
<keyword id="KW-0378">Hydrolase</keyword>
<keyword id="KW-0547">Nucleotide-binding</keyword>
<keyword id="KW-1185">Reference proteome</keyword>
<keyword id="KW-0694">RNA-binding</keyword>
<protein>
    <recommendedName>
        <fullName>Probable ATP-dependent RNA helicase DDX10</fullName>
        <ecNumber>3.6.4.13</ecNumber>
    </recommendedName>
    <alternativeName>
        <fullName>DEAD box protein 10</fullName>
    </alternativeName>
</protein>
<comment type="function">
    <text evidence="1">Putative ATP-dependent RNA helicase.</text>
</comment>
<comment type="catalytic activity">
    <reaction>
        <text>ATP + H2O = ADP + phosphate + H(+)</text>
        <dbReference type="Rhea" id="RHEA:13065"/>
        <dbReference type="ChEBI" id="CHEBI:15377"/>
        <dbReference type="ChEBI" id="CHEBI:15378"/>
        <dbReference type="ChEBI" id="CHEBI:30616"/>
        <dbReference type="ChEBI" id="CHEBI:43474"/>
        <dbReference type="ChEBI" id="CHEBI:456216"/>
        <dbReference type="EC" id="3.6.4.13"/>
    </reaction>
</comment>
<comment type="domain">
    <text>The Q motif is unique to and characteristic of the DEAD box family of RNA helicases and controls ATP binding and hydrolysis.</text>
</comment>
<comment type="similarity">
    <text evidence="6">Belongs to the DEAD box helicase family. DDX10/DBP4 subfamily.</text>
</comment>
<evidence type="ECO:0000250" key="1"/>
<evidence type="ECO:0000255" key="2"/>
<evidence type="ECO:0000255" key="3">
    <source>
        <dbReference type="PROSITE-ProRule" id="PRU00541"/>
    </source>
</evidence>
<evidence type="ECO:0000255" key="4">
    <source>
        <dbReference type="PROSITE-ProRule" id="PRU00542"/>
    </source>
</evidence>
<evidence type="ECO:0000256" key="5">
    <source>
        <dbReference type="SAM" id="MobiDB-lite"/>
    </source>
</evidence>
<evidence type="ECO:0000305" key="6"/>
<feature type="chain" id="PRO_0000252208" description="Probable ATP-dependent RNA helicase DDX10">
    <location>
        <begin position="1"/>
        <end position="875"/>
    </location>
</feature>
<feature type="domain" description="Helicase ATP-binding" evidence="3">
    <location>
        <begin position="104"/>
        <end position="278"/>
    </location>
</feature>
<feature type="domain" description="Helicase C-terminal" evidence="4">
    <location>
        <begin position="291"/>
        <end position="453"/>
    </location>
</feature>
<feature type="region of interest" description="Disordered" evidence="5">
    <location>
        <begin position="528"/>
        <end position="633"/>
    </location>
</feature>
<feature type="region of interest" description="Disordered" evidence="5">
    <location>
        <begin position="653"/>
        <end position="672"/>
    </location>
</feature>
<feature type="region of interest" description="Disordered" evidence="5">
    <location>
        <begin position="743"/>
        <end position="856"/>
    </location>
</feature>
<feature type="coiled-coil region" evidence="2">
    <location>
        <begin position="736"/>
        <end position="773"/>
    </location>
</feature>
<feature type="short sequence motif" description="Q motif">
    <location>
        <begin position="73"/>
        <end position="101"/>
    </location>
</feature>
<feature type="short sequence motif" description="DEAD box">
    <location>
        <begin position="226"/>
        <end position="229"/>
    </location>
</feature>
<feature type="compositionally biased region" description="Basic and acidic residues" evidence="5">
    <location>
        <begin position="529"/>
        <end position="541"/>
    </location>
</feature>
<feature type="compositionally biased region" description="Basic and acidic residues" evidence="5">
    <location>
        <begin position="569"/>
        <end position="580"/>
    </location>
</feature>
<feature type="compositionally biased region" description="Acidic residues" evidence="5">
    <location>
        <begin position="624"/>
        <end position="633"/>
    </location>
</feature>
<feature type="compositionally biased region" description="Basic and acidic residues" evidence="5">
    <location>
        <begin position="752"/>
        <end position="771"/>
    </location>
</feature>
<feature type="compositionally biased region" description="Acidic residues" evidence="5">
    <location>
        <begin position="800"/>
        <end position="809"/>
    </location>
</feature>
<feature type="compositionally biased region" description="Basic and acidic residues" evidence="5">
    <location>
        <begin position="810"/>
        <end position="819"/>
    </location>
</feature>
<feature type="binding site" evidence="3">
    <location>
        <begin position="93"/>
        <end position="95"/>
    </location>
    <ligand>
        <name>ATP</name>
        <dbReference type="ChEBI" id="CHEBI:30616"/>
    </ligand>
</feature>
<feature type="binding site" evidence="1">
    <location>
        <position position="100"/>
    </location>
    <ligand>
        <name>ATP</name>
        <dbReference type="ChEBI" id="CHEBI:30616"/>
    </ligand>
</feature>
<feature type="binding site" evidence="3">
    <location>
        <begin position="117"/>
        <end position="124"/>
    </location>
    <ligand>
        <name>ATP</name>
        <dbReference type="ChEBI" id="CHEBI:30616"/>
    </ligand>
</feature>
<gene>
    <name type="primary">DDX10</name>
    <name type="ORF">RCJMB04_18j24</name>
</gene>
<name>DDX10_CHICK</name>
<sequence>MGRAGGGSGDGGEEPAALEAVRSFERWKKKYSRRTRRLRLQRKERERPEWQVEREGIGRLVQRYPQINANEIQRFSDFPLSKKTLKGLQEAQYRMVTEIQRQTIGLALQGKDVLGAAKTGSGKTLAFIVPALELLYRLQWTSADGLGVLIISPTRELAFQTFKVLRKVGKNHDFSAGLIIGGKDLKEESERIHHINMLICTPGRLLQHMDETSYFYASDLQMLILDEADRILDMGFADTMNAIIENLPKKRQTLLFSATQTKSVKDLARLSLKDPEYVWVHEKAKFSTPATLDQNYIVCELQHKINVLYSFLRSHLKKKSIVFFASCKEVQYLFRVFCKLQPGLPVLALHGKQQQMKRMEVYTCFVRKKAAVLFATDIAARGLDFPAVNWVIQFDCPEDANTYIHRVGRTARYKEGGEALLVLLPSEEKGMVEQLAQRKVPVNEIKINPEKITDIQKRMQAFLAQDQELKEKAQRCFVSYLRSVYLMKNKEVFDVFKLPLAEYALSLGLAMAPRVRFLQKVQKQLSVKETSERNPLKDTEQNKNTISSLNKEGMEECRINPSGKLSVNRSKEEENRKETEQYPPSSEGTEESGSECESKEASEEEEKEGALSSRVPYTNSMQFFEDDDDDDDTKDLDLLTVKRRDVFDLESKDSPALNASNSKMKKKTTKTQEAKKILKKKFKVNTRIVFTEDGELVQQWPPVQKSGLAKADEEDDASGINLDKVREILREEDKFDKEEYRKKIKEKHREKRLKEKAARREARNKNARAEGETVAVLAHSGSEDEFDPSTLPDPDKYKDSDEEQDTESEDSYRELEEKSGRKRRSHGGSIAAGEMPQKRKKAKFSQEEDPFLPLDTGLSLAEDEELVLHLLKSHS</sequence>
<accession>Q5ZJF6</accession>
<proteinExistence type="evidence at transcript level"/>
<reference key="1">
    <citation type="journal article" date="2005" name="Genome Biol.">
        <title>Full-length cDNAs from chicken bursal lymphocytes to facilitate gene function analysis.</title>
        <authorList>
            <person name="Caldwell R.B."/>
            <person name="Kierzek A.M."/>
            <person name="Arakawa H."/>
            <person name="Bezzubov Y."/>
            <person name="Zaim J."/>
            <person name="Fiedler P."/>
            <person name="Kutter S."/>
            <person name="Blagodatski A."/>
            <person name="Kostovska D."/>
            <person name="Koter M."/>
            <person name="Plachy J."/>
            <person name="Carninci P."/>
            <person name="Hayashizaki Y."/>
            <person name="Buerstedde J.-M."/>
        </authorList>
    </citation>
    <scope>NUCLEOTIDE SEQUENCE [LARGE SCALE MRNA]</scope>
    <source>
        <strain>CB</strain>
        <tissue>Bursa of Fabricius</tissue>
    </source>
</reference>